<sequence length="394" mass="41776">MNKKSIRDVELAGKRVFCRVDFNVPMQDGVITDDTRIRAAVPTIRFMMEAGAKVILASHFGRPKGQVVEEMRLTPVAAHLSSLLGKDVRKLEDCQGADVEAAVERMESGDVILLENVRFHAGEEKNDPELAKSFAALADLFVNDAFGTAHRAHASTAGIAEYIPAVAGLLMEKEIRFMGGALSNPERPFTAIVGGAKVKDKIAVIENLLTKVDHLIIGGGMANTFLKAQGYGIGASLCEDDKLDLARTLMEQAKERGVQLLMPVDVVVADRFAADAEKQVVAIDAIPEGWMALDIGPKTVEQYHSVIVDSKTVVWNGPMGVFEMDAFAGGTIGVAKAMAACSGTTIIGGGDSVAAVEKAGVAEQMTHISTGGGASLEFMEGKELPGVAVLADNQ</sequence>
<gene>
    <name evidence="1" type="primary">pgk</name>
    <name type="ordered locus">BBR47_52380</name>
</gene>
<dbReference type="EC" id="2.7.2.3" evidence="1"/>
<dbReference type="EMBL" id="AP008955">
    <property type="protein sequence ID" value="BAH46215.1"/>
    <property type="molecule type" value="Genomic_DNA"/>
</dbReference>
<dbReference type="RefSeq" id="WP_015893466.1">
    <property type="nucleotide sequence ID" value="NC_012491.1"/>
</dbReference>
<dbReference type="SMR" id="C0Z6L6"/>
<dbReference type="STRING" id="358681.BBR47_52380"/>
<dbReference type="KEGG" id="bbe:BBR47_52380"/>
<dbReference type="eggNOG" id="COG0126">
    <property type="taxonomic scope" value="Bacteria"/>
</dbReference>
<dbReference type="HOGENOM" id="CLU_025427_0_2_9"/>
<dbReference type="UniPathway" id="UPA00109">
    <property type="reaction ID" value="UER00185"/>
</dbReference>
<dbReference type="Proteomes" id="UP000001877">
    <property type="component" value="Chromosome"/>
</dbReference>
<dbReference type="GO" id="GO:0005829">
    <property type="term" value="C:cytosol"/>
    <property type="evidence" value="ECO:0007669"/>
    <property type="project" value="TreeGrafter"/>
</dbReference>
<dbReference type="GO" id="GO:0043531">
    <property type="term" value="F:ADP binding"/>
    <property type="evidence" value="ECO:0007669"/>
    <property type="project" value="TreeGrafter"/>
</dbReference>
<dbReference type="GO" id="GO:0005524">
    <property type="term" value="F:ATP binding"/>
    <property type="evidence" value="ECO:0007669"/>
    <property type="project" value="UniProtKB-KW"/>
</dbReference>
<dbReference type="GO" id="GO:0004618">
    <property type="term" value="F:phosphoglycerate kinase activity"/>
    <property type="evidence" value="ECO:0007669"/>
    <property type="project" value="UniProtKB-UniRule"/>
</dbReference>
<dbReference type="GO" id="GO:0006094">
    <property type="term" value="P:gluconeogenesis"/>
    <property type="evidence" value="ECO:0007669"/>
    <property type="project" value="TreeGrafter"/>
</dbReference>
<dbReference type="GO" id="GO:0006096">
    <property type="term" value="P:glycolytic process"/>
    <property type="evidence" value="ECO:0007669"/>
    <property type="project" value="UniProtKB-UniRule"/>
</dbReference>
<dbReference type="CDD" id="cd00318">
    <property type="entry name" value="Phosphoglycerate_kinase"/>
    <property type="match status" value="1"/>
</dbReference>
<dbReference type="FunFam" id="3.40.50.1260:FF:000002">
    <property type="entry name" value="Phosphoglycerate kinase"/>
    <property type="match status" value="1"/>
</dbReference>
<dbReference type="FunFam" id="3.40.50.1260:FF:000007">
    <property type="entry name" value="Phosphoglycerate kinase"/>
    <property type="match status" value="1"/>
</dbReference>
<dbReference type="Gene3D" id="3.40.50.1260">
    <property type="entry name" value="Phosphoglycerate kinase, N-terminal domain"/>
    <property type="match status" value="2"/>
</dbReference>
<dbReference type="HAMAP" id="MF_00145">
    <property type="entry name" value="Phosphoglyc_kinase"/>
    <property type="match status" value="1"/>
</dbReference>
<dbReference type="InterPro" id="IPR001576">
    <property type="entry name" value="Phosphoglycerate_kinase"/>
</dbReference>
<dbReference type="InterPro" id="IPR015911">
    <property type="entry name" value="Phosphoglycerate_kinase_CS"/>
</dbReference>
<dbReference type="InterPro" id="IPR015824">
    <property type="entry name" value="Phosphoglycerate_kinase_N"/>
</dbReference>
<dbReference type="InterPro" id="IPR036043">
    <property type="entry name" value="Phosphoglycerate_kinase_sf"/>
</dbReference>
<dbReference type="PANTHER" id="PTHR11406">
    <property type="entry name" value="PHOSPHOGLYCERATE KINASE"/>
    <property type="match status" value="1"/>
</dbReference>
<dbReference type="PANTHER" id="PTHR11406:SF23">
    <property type="entry name" value="PHOSPHOGLYCERATE KINASE 1, CHLOROPLASTIC-RELATED"/>
    <property type="match status" value="1"/>
</dbReference>
<dbReference type="Pfam" id="PF00162">
    <property type="entry name" value="PGK"/>
    <property type="match status" value="1"/>
</dbReference>
<dbReference type="PIRSF" id="PIRSF000724">
    <property type="entry name" value="Pgk"/>
    <property type="match status" value="1"/>
</dbReference>
<dbReference type="PRINTS" id="PR00477">
    <property type="entry name" value="PHGLYCKINASE"/>
</dbReference>
<dbReference type="SUPFAM" id="SSF53748">
    <property type="entry name" value="Phosphoglycerate kinase"/>
    <property type="match status" value="1"/>
</dbReference>
<dbReference type="PROSITE" id="PS00111">
    <property type="entry name" value="PGLYCERATE_KINASE"/>
    <property type="match status" value="1"/>
</dbReference>
<feature type="chain" id="PRO_1000192810" description="Phosphoglycerate kinase">
    <location>
        <begin position="1"/>
        <end position="394"/>
    </location>
</feature>
<feature type="binding site" evidence="1">
    <location>
        <begin position="21"/>
        <end position="23"/>
    </location>
    <ligand>
        <name>substrate</name>
    </ligand>
</feature>
<feature type="binding site" evidence="1">
    <location>
        <position position="36"/>
    </location>
    <ligand>
        <name>substrate</name>
    </ligand>
</feature>
<feature type="binding site" evidence="1">
    <location>
        <begin position="59"/>
        <end position="62"/>
    </location>
    <ligand>
        <name>substrate</name>
    </ligand>
</feature>
<feature type="binding site" evidence="1">
    <location>
        <position position="118"/>
    </location>
    <ligand>
        <name>substrate</name>
    </ligand>
</feature>
<feature type="binding site" evidence="1">
    <location>
        <position position="151"/>
    </location>
    <ligand>
        <name>substrate</name>
    </ligand>
</feature>
<feature type="binding site" evidence="1">
    <location>
        <position position="201"/>
    </location>
    <ligand>
        <name>ATP</name>
        <dbReference type="ChEBI" id="CHEBI:30616"/>
    </ligand>
</feature>
<feature type="binding site" evidence="1">
    <location>
        <position position="323"/>
    </location>
    <ligand>
        <name>ATP</name>
        <dbReference type="ChEBI" id="CHEBI:30616"/>
    </ligand>
</feature>
<feature type="binding site" evidence="1">
    <location>
        <begin position="349"/>
        <end position="352"/>
    </location>
    <ligand>
        <name>ATP</name>
        <dbReference type="ChEBI" id="CHEBI:30616"/>
    </ligand>
</feature>
<keyword id="KW-0067">ATP-binding</keyword>
<keyword id="KW-0963">Cytoplasm</keyword>
<keyword id="KW-0324">Glycolysis</keyword>
<keyword id="KW-0418">Kinase</keyword>
<keyword id="KW-0547">Nucleotide-binding</keyword>
<keyword id="KW-1185">Reference proteome</keyword>
<keyword id="KW-0808">Transferase</keyword>
<organism>
    <name type="scientific">Brevibacillus brevis (strain 47 / JCM 6285 / NBRC 100599)</name>
    <dbReference type="NCBI Taxonomy" id="358681"/>
    <lineage>
        <taxon>Bacteria</taxon>
        <taxon>Bacillati</taxon>
        <taxon>Bacillota</taxon>
        <taxon>Bacilli</taxon>
        <taxon>Bacillales</taxon>
        <taxon>Paenibacillaceae</taxon>
        <taxon>Brevibacillus</taxon>
    </lineage>
</organism>
<proteinExistence type="inferred from homology"/>
<reference key="1">
    <citation type="submission" date="2005-03" db="EMBL/GenBank/DDBJ databases">
        <title>Brevibacillus brevis strain 47, complete genome.</title>
        <authorList>
            <person name="Hosoyama A."/>
            <person name="Yamada R."/>
            <person name="Hongo Y."/>
            <person name="Terui Y."/>
            <person name="Ankai A."/>
            <person name="Masuyama W."/>
            <person name="Sekiguchi M."/>
            <person name="Takeda T."/>
            <person name="Asano K."/>
            <person name="Ohji S."/>
            <person name="Ichikawa N."/>
            <person name="Narita S."/>
            <person name="Aoki N."/>
            <person name="Miura H."/>
            <person name="Matsushita S."/>
            <person name="Sekigawa T."/>
            <person name="Yamagata H."/>
            <person name="Yoshikawa H."/>
            <person name="Udaka S."/>
            <person name="Tanikawa S."/>
            <person name="Fujita N."/>
        </authorList>
    </citation>
    <scope>NUCLEOTIDE SEQUENCE [LARGE SCALE GENOMIC DNA]</scope>
    <source>
        <strain>47 / JCM 6285 / NBRC 100599</strain>
    </source>
</reference>
<comment type="catalytic activity">
    <reaction evidence="1">
        <text>(2R)-3-phosphoglycerate + ATP = (2R)-3-phospho-glyceroyl phosphate + ADP</text>
        <dbReference type="Rhea" id="RHEA:14801"/>
        <dbReference type="ChEBI" id="CHEBI:30616"/>
        <dbReference type="ChEBI" id="CHEBI:57604"/>
        <dbReference type="ChEBI" id="CHEBI:58272"/>
        <dbReference type="ChEBI" id="CHEBI:456216"/>
        <dbReference type="EC" id="2.7.2.3"/>
    </reaction>
</comment>
<comment type="pathway">
    <text evidence="1">Carbohydrate degradation; glycolysis; pyruvate from D-glyceraldehyde 3-phosphate: step 2/5.</text>
</comment>
<comment type="subunit">
    <text evidence="1">Monomer.</text>
</comment>
<comment type="subcellular location">
    <subcellularLocation>
        <location evidence="1">Cytoplasm</location>
    </subcellularLocation>
</comment>
<comment type="similarity">
    <text evidence="1">Belongs to the phosphoglycerate kinase family.</text>
</comment>
<name>PGK_BREBN</name>
<protein>
    <recommendedName>
        <fullName evidence="1">Phosphoglycerate kinase</fullName>
        <ecNumber evidence="1">2.7.2.3</ecNumber>
    </recommendedName>
</protein>
<accession>C0Z6L6</accession>
<evidence type="ECO:0000255" key="1">
    <source>
        <dbReference type="HAMAP-Rule" id="MF_00145"/>
    </source>
</evidence>